<feature type="chain" id="PRO_1000047634" description="Glutamate racemase">
    <location>
        <begin position="1"/>
        <end position="270"/>
    </location>
</feature>
<feature type="active site" description="Proton donor/acceptor" evidence="1">
    <location>
        <position position="78"/>
    </location>
</feature>
<feature type="active site" description="Proton donor/acceptor" evidence="1">
    <location>
        <position position="189"/>
    </location>
</feature>
<feature type="binding site" evidence="1">
    <location>
        <begin position="15"/>
        <end position="16"/>
    </location>
    <ligand>
        <name>substrate</name>
    </ligand>
</feature>
<feature type="binding site" evidence="1">
    <location>
        <begin position="47"/>
        <end position="48"/>
    </location>
    <ligand>
        <name>substrate</name>
    </ligand>
</feature>
<feature type="binding site" evidence="1">
    <location>
        <begin position="79"/>
        <end position="80"/>
    </location>
    <ligand>
        <name>substrate</name>
    </ligand>
</feature>
<feature type="binding site" evidence="1">
    <location>
        <begin position="190"/>
        <end position="191"/>
    </location>
    <ligand>
        <name>substrate</name>
    </ligand>
</feature>
<evidence type="ECO:0000255" key="1">
    <source>
        <dbReference type="HAMAP-Rule" id="MF_00258"/>
    </source>
</evidence>
<reference key="1">
    <citation type="journal article" date="2007" name="Proc. Natl. Acad. Sci. U.S.A.">
        <title>The genome of Syntrophus aciditrophicus: life at the thermodynamic limit of microbial growth.</title>
        <authorList>
            <person name="McInerney M.J."/>
            <person name="Rohlin L."/>
            <person name="Mouttaki H."/>
            <person name="Kim U."/>
            <person name="Krupp R.S."/>
            <person name="Rios-Hernandez L."/>
            <person name="Sieber J."/>
            <person name="Struchtemeyer C.G."/>
            <person name="Bhattacharyya A."/>
            <person name="Campbell J.W."/>
            <person name="Gunsalus R.P."/>
        </authorList>
    </citation>
    <scope>NUCLEOTIDE SEQUENCE [LARGE SCALE GENOMIC DNA]</scope>
    <source>
        <strain>SB</strain>
    </source>
</reference>
<keyword id="KW-0133">Cell shape</keyword>
<keyword id="KW-0961">Cell wall biogenesis/degradation</keyword>
<keyword id="KW-0413">Isomerase</keyword>
<keyword id="KW-0573">Peptidoglycan synthesis</keyword>
<keyword id="KW-1185">Reference proteome</keyword>
<dbReference type="EC" id="5.1.1.3" evidence="1"/>
<dbReference type="EMBL" id="CP000252">
    <property type="protein sequence ID" value="ABC78961.1"/>
    <property type="molecule type" value="Genomic_DNA"/>
</dbReference>
<dbReference type="RefSeq" id="WP_011418975.1">
    <property type="nucleotide sequence ID" value="NC_007759.1"/>
</dbReference>
<dbReference type="SMR" id="Q2LXZ9"/>
<dbReference type="FunCoup" id="Q2LXZ9">
    <property type="interactions" value="226"/>
</dbReference>
<dbReference type="STRING" id="56780.SYN_00222"/>
<dbReference type="KEGG" id="sat:SYN_00222"/>
<dbReference type="eggNOG" id="COG0796">
    <property type="taxonomic scope" value="Bacteria"/>
</dbReference>
<dbReference type="HOGENOM" id="CLU_052344_0_2_7"/>
<dbReference type="InParanoid" id="Q2LXZ9"/>
<dbReference type="OrthoDB" id="9801055at2"/>
<dbReference type="UniPathway" id="UPA00219"/>
<dbReference type="Proteomes" id="UP000001933">
    <property type="component" value="Chromosome"/>
</dbReference>
<dbReference type="GO" id="GO:0008881">
    <property type="term" value="F:glutamate racemase activity"/>
    <property type="evidence" value="ECO:0007669"/>
    <property type="project" value="UniProtKB-UniRule"/>
</dbReference>
<dbReference type="GO" id="GO:0071555">
    <property type="term" value="P:cell wall organization"/>
    <property type="evidence" value="ECO:0007669"/>
    <property type="project" value="UniProtKB-KW"/>
</dbReference>
<dbReference type="GO" id="GO:0009252">
    <property type="term" value="P:peptidoglycan biosynthetic process"/>
    <property type="evidence" value="ECO:0007669"/>
    <property type="project" value="UniProtKB-UniRule"/>
</dbReference>
<dbReference type="GO" id="GO:0008360">
    <property type="term" value="P:regulation of cell shape"/>
    <property type="evidence" value="ECO:0007669"/>
    <property type="project" value="UniProtKB-KW"/>
</dbReference>
<dbReference type="FunFam" id="3.40.50.1860:FF:000001">
    <property type="entry name" value="Glutamate racemase"/>
    <property type="match status" value="1"/>
</dbReference>
<dbReference type="Gene3D" id="3.40.50.1860">
    <property type="match status" value="2"/>
</dbReference>
<dbReference type="HAMAP" id="MF_00258">
    <property type="entry name" value="Glu_racemase"/>
    <property type="match status" value="1"/>
</dbReference>
<dbReference type="InterPro" id="IPR015942">
    <property type="entry name" value="Asp/Glu/hydantoin_racemase"/>
</dbReference>
<dbReference type="InterPro" id="IPR001920">
    <property type="entry name" value="Asp/Glu_race"/>
</dbReference>
<dbReference type="InterPro" id="IPR033134">
    <property type="entry name" value="Asp/Glu_racemase_AS_2"/>
</dbReference>
<dbReference type="InterPro" id="IPR004391">
    <property type="entry name" value="Glu_race"/>
</dbReference>
<dbReference type="NCBIfam" id="TIGR00067">
    <property type="entry name" value="glut_race"/>
    <property type="match status" value="1"/>
</dbReference>
<dbReference type="PANTHER" id="PTHR21198">
    <property type="entry name" value="GLUTAMATE RACEMASE"/>
    <property type="match status" value="1"/>
</dbReference>
<dbReference type="PANTHER" id="PTHR21198:SF2">
    <property type="entry name" value="GLUTAMATE RACEMASE"/>
    <property type="match status" value="1"/>
</dbReference>
<dbReference type="Pfam" id="PF01177">
    <property type="entry name" value="Asp_Glu_race"/>
    <property type="match status" value="1"/>
</dbReference>
<dbReference type="SUPFAM" id="SSF53681">
    <property type="entry name" value="Aspartate/glutamate racemase"/>
    <property type="match status" value="2"/>
</dbReference>
<dbReference type="PROSITE" id="PS00924">
    <property type="entry name" value="ASP_GLU_RACEMASE_2"/>
    <property type="match status" value="1"/>
</dbReference>
<comment type="function">
    <text evidence="1">Provides the (R)-glutamate required for cell wall biosynthesis.</text>
</comment>
<comment type="catalytic activity">
    <reaction evidence="1">
        <text>L-glutamate = D-glutamate</text>
        <dbReference type="Rhea" id="RHEA:12813"/>
        <dbReference type="ChEBI" id="CHEBI:29985"/>
        <dbReference type="ChEBI" id="CHEBI:29986"/>
        <dbReference type="EC" id="5.1.1.3"/>
    </reaction>
</comment>
<comment type="pathway">
    <text evidence="1">Cell wall biogenesis; peptidoglycan biosynthesis.</text>
</comment>
<comment type="similarity">
    <text evidence="1">Belongs to the aspartate/glutamate racemases family.</text>
</comment>
<name>MURI_SYNAS</name>
<proteinExistence type="inferred from homology"/>
<protein>
    <recommendedName>
        <fullName evidence="1">Glutamate racemase</fullName>
        <ecNumber evidence="1">5.1.1.3</ecNumber>
    </recommendedName>
</protein>
<accession>Q2LXZ9</accession>
<sequence length="270" mass="29770">MNKNSPELHPIGVFDSGVGGLTVVRALMERLPFENILYFGDTARVPYGVKSVETINAYARQITEFLLRQEVKLLIIACNTMAAVARQSVESLSPVPVLDVIDAGARRAVAETRTHSVGVIGTPTTINSNAYARAICRLAPETRIFSQACALLVPLVEEGWLDHPVTRLTAQEYLRPVLAEHIDTLVLGCTHYPLLKALLQDVAGPDIHLVDSAEAMADATAELLQVQHLTNPERIPPEYRFYVTDVPLRFQQIGERFLGRSLPGVERVQL</sequence>
<organism>
    <name type="scientific">Syntrophus aciditrophicus (strain SB)</name>
    <dbReference type="NCBI Taxonomy" id="56780"/>
    <lineage>
        <taxon>Bacteria</taxon>
        <taxon>Pseudomonadati</taxon>
        <taxon>Thermodesulfobacteriota</taxon>
        <taxon>Syntrophia</taxon>
        <taxon>Syntrophales</taxon>
        <taxon>Syntrophaceae</taxon>
        <taxon>Syntrophus</taxon>
    </lineage>
</organism>
<gene>
    <name evidence="1" type="primary">murI</name>
    <name type="ordered locus">SYNAS_30820</name>
    <name type="ORF">SYN_00222</name>
</gene>